<proteinExistence type="inferred from homology"/>
<keyword id="KW-0021">Allosteric enzyme</keyword>
<keyword id="KW-0067">ATP-binding</keyword>
<keyword id="KW-0963">Cytoplasm</keyword>
<keyword id="KW-0418">Kinase</keyword>
<keyword id="KW-0547">Nucleotide-binding</keyword>
<keyword id="KW-0665">Pyrimidine biosynthesis</keyword>
<keyword id="KW-0808">Transferase</keyword>
<organism>
    <name type="scientific">Salmonella choleraesuis (strain SC-B67)</name>
    <dbReference type="NCBI Taxonomy" id="321314"/>
    <lineage>
        <taxon>Bacteria</taxon>
        <taxon>Pseudomonadati</taxon>
        <taxon>Pseudomonadota</taxon>
        <taxon>Gammaproteobacteria</taxon>
        <taxon>Enterobacterales</taxon>
        <taxon>Enterobacteriaceae</taxon>
        <taxon>Salmonella</taxon>
    </lineage>
</organism>
<protein>
    <recommendedName>
        <fullName evidence="1">Uridylate kinase</fullName>
        <shortName evidence="1">UK</shortName>
        <ecNumber evidence="1">2.7.4.22</ecNumber>
    </recommendedName>
    <alternativeName>
        <fullName evidence="1">Uridine monophosphate kinase</fullName>
        <shortName evidence="1">UMP kinase</shortName>
        <shortName evidence="1">UMPK</shortName>
    </alternativeName>
</protein>
<feature type="chain" id="PRO_1000054002" description="Uridylate kinase">
    <location>
        <begin position="1"/>
        <end position="241"/>
    </location>
</feature>
<feature type="region of interest" description="Involved in allosteric activation by GTP" evidence="1">
    <location>
        <begin position="23"/>
        <end position="28"/>
    </location>
</feature>
<feature type="binding site" evidence="1">
    <location>
        <begin position="15"/>
        <end position="18"/>
    </location>
    <ligand>
        <name>ATP</name>
        <dbReference type="ChEBI" id="CHEBI:30616"/>
    </ligand>
</feature>
<feature type="binding site" evidence="1">
    <location>
        <position position="57"/>
    </location>
    <ligand>
        <name>UMP</name>
        <dbReference type="ChEBI" id="CHEBI:57865"/>
    </ligand>
</feature>
<feature type="binding site" evidence="1">
    <location>
        <position position="58"/>
    </location>
    <ligand>
        <name>ATP</name>
        <dbReference type="ChEBI" id="CHEBI:30616"/>
    </ligand>
</feature>
<feature type="binding site" evidence="1">
    <location>
        <position position="62"/>
    </location>
    <ligand>
        <name>ATP</name>
        <dbReference type="ChEBI" id="CHEBI:30616"/>
    </ligand>
</feature>
<feature type="binding site" evidence="1">
    <location>
        <position position="77"/>
    </location>
    <ligand>
        <name>UMP</name>
        <dbReference type="ChEBI" id="CHEBI:57865"/>
    </ligand>
</feature>
<feature type="binding site" evidence="1">
    <location>
        <begin position="138"/>
        <end position="145"/>
    </location>
    <ligand>
        <name>UMP</name>
        <dbReference type="ChEBI" id="CHEBI:57865"/>
    </ligand>
</feature>
<feature type="binding site" evidence="1">
    <location>
        <position position="165"/>
    </location>
    <ligand>
        <name>ATP</name>
        <dbReference type="ChEBI" id="CHEBI:30616"/>
    </ligand>
</feature>
<feature type="binding site" evidence="1">
    <location>
        <position position="171"/>
    </location>
    <ligand>
        <name>ATP</name>
        <dbReference type="ChEBI" id="CHEBI:30616"/>
    </ligand>
</feature>
<feature type="binding site" evidence="1">
    <location>
        <position position="174"/>
    </location>
    <ligand>
        <name>ATP</name>
        <dbReference type="ChEBI" id="CHEBI:30616"/>
    </ligand>
</feature>
<dbReference type="EC" id="2.7.4.22" evidence="1"/>
<dbReference type="EMBL" id="AE017220">
    <property type="protein sequence ID" value="AAX64124.1"/>
    <property type="molecule type" value="Genomic_DNA"/>
</dbReference>
<dbReference type="RefSeq" id="WP_000224567.1">
    <property type="nucleotide sequence ID" value="NC_006905.1"/>
</dbReference>
<dbReference type="SMR" id="Q57T37"/>
<dbReference type="KEGG" id="sec:SCH_0218"/>
<dbReference type="HOGENOM" id="CLU_033861_0_0_6"/>
<dbReference type="UniPathway" id="UPA00159">
    <property type="reaction ID" value="UER00275"/>
</dbReference>
<dbReference type="Proteomes" id="UP000000538">
    <property type="component" value="Chromosome"/>
</dbReference>
<dbReference type="GO" id="GO:0005829">
    <property type="term" value="C:cytosol"/>
    <property type="evidence" value="ECO:0007669"/>
    <property type="project" value="TreeGrafter"/>
</dbReference>
<dbReference type="GO" id="GO:0005524">
    <property type="term" value="F:ATP binding"/>
    <property type="evidence" value="ECO:0007669"/>
    <property type="project" value="UniProtKB-KW"/>
</dbReference>
<dbReference type="GO" id="GO:0033862">
    <property type="term" value="F:UMP kinase activity"/>
    <property type="evidence" value="ECO:0007669"/>
    <property type="project" value="UniProtKB-EC"/>
</dbReference>
<dbReference type="GO" id="GO:0044210">
    <property type="term" value="P:'de novo' CTP biosynthetic process"/>
    <property type="evidence" value="ECO:0007669"/>
    <property type="project" value="UniProtKB-UniRule"/>
</dbReference>
<dbReference type="GO" id="GO:0006225">
    <property type="term" value="P:UDP biosynthetic process"/>
    <property type="evidence" value="ECO:0007669"/>
    <property type="project" value="TreeGrafter"/>
</dbReference>
<dbReference type="CDD" id="cd04254">
    <property type="entry name" value="AAK_UMPK-PyrH-Ec"/>
    <property type="match status" value="1"/>
</dbReference>
<dbReference type="FunFam" id="3.40.1160.10:FF:000001">
    <property type="entry name" value="Uridylate kinase"/>
    <property type="match status" value="1"/>
</dbReference>
<dbReference type="Gene3D" id="3.40.1160.10">
    <property type="entry name" value="Acetylglutamate kinase-like"/>
    <property type="match status" value="1"/>
</dbReference>
<dbReference type="HAMAP" id="MF_01220_B">
    <property type="entry name" value="PyrH_B"/>
    <property type="match status" value="1"/>
</dbReference>
<dbReference type="InterPro" id="IPR036393">
    <property type="entry name" value="AceGlu_kinase-like_sf"/>
</dbReference>
<dbReference type="InterPro" id="IPR001048">
    <property type="entry name" value="Asp/Glu/Uridylate_kinase"/>
</dbReference>
<dbReference type="InterPro" id="IPR011817">
    <property type="entry name" value="Uridylate_kinase"/>
</dbReference>
<dbReference type="InterPro" id="IPR015963">
    <property type="entry name" value="Uridylate_kinase_bac"/>
</dbReference>
<dbReference type="NCBIfam" id="TIGR02075">
    <property type="entry name" value="pyrH_bact"/>
    <property type="match status" value="1"/>
</dbReference>
<dbReference type="PANTHER" id="PTHR42833">
    <property type="entry name" value="URIDYLATE KINASE"/>
    <property type="match status" value="1"/>
</dbReference>
<dbReference type="PANTHER" id="PTHR42833:SF4">
    <property type="entry name" value="URIDYLATE KINASE PUMPKIN, CHLOROPLASTIC"/>
    <property type="match status" value="1"/>
</dbReference>
<dbReference type="Pfam" id="PF00696">
    <property type="entry name" value="AA_kinase"/>
    <property type="match status" value="1"/>
</dbReference>
<dbReference type="PIRSF" id="PIRSF005650">
    <property type="entry name" value="Uridylate_kin"/>
    <property type="match status" value="1"/>
</dbReference>
<dbReference type="SUPFAM" id="SSF53633">
    <property type="entry name" value="Carbamate kinase-like"/>
    <property type="match status" value="1"/>
</dbReference>
<name>PYRH_SALCH</name>
<evidence type="ECO:0000255" key="1">
    <source>
        <dbReference type="HAMAP-Rule" id="MF_01220"/>
    </source>
</evidence>
<accession>Q57T37</accession>
<sequence length="241" mass="25955">MATNAKPVYKRILLKLSGEALQGTEGFGIDASILDRMAQEIKELVELGIQVGVVIGGGNLFRGAGLAKAGMNRVVGDHMGMLATVMNGLAMRDALHRAYVNARLMSAIPLNGVCDNYSWAEAISLLRNNRVVILSAGTGNPFFTTDSAACLRGIEIEADVVLKATKVDGVFTADPAKDPSATMYDQLTYSEVLDKELKVMDLAAFTLARDHKLPIRVFNMNKPGALRRVVMGEKEGTLITE</sequence>
<comment type="function">
    <text evidence="1">Catalyzes the reversible phosphorylation of UMP to UDP.</text>
</comment>
<comment type="catalytic activity">
    <reaction evidence="1">
        <text>UMP + ATP = UDP + ADP</text>
        <dbReference type="Rhea" id="RHEA:24400"/>
        <dbReference type="ChEBI" id="CHEBI:30616"/>
        <dbReference type="ChEBI" id="CHEBI:57865"/>
        <dbReference type="ChEBI" id="CHEBI:58223"/>
        <dbReference type="ChEBI" id="CHEBI:456216"/>
        <dbReference type="EC" id="2.7.4.22"/>
    </reaction>
</comment>
<comment type="activity regulation">
    <text evidence="1">Allosterically activated by GTP. Inhibited by UTP.</text>
</comment>
<comment type="pathway">
    <text evidence="1">Pyrimidine metabolism; CTP biosynthesis via de novo pathway; UDP from UMP (UMPK route): step 1/1.</text>
</comment>
<comment type="subunit">
    <text evidence="1">Homohexamer.</text>
</comment>
<comment type="subcellular location">
    <subcellularLocation>
        <location evidence="1">Cytoplasm</location>
    </subcellularLocation>
</comment>
<comment type="similarity">
    <text evidence="1">Belongs to the UMP kinase family.</text>
</comment>
<reference key="1">
    <citation type="journal article" date="2005" name="Nucleic Acids Res.">
        <title>The genome sequence of Salmonella enterica serovar Choleraesuis, a highly invasive and resistant zoonotic pathogen.</title>
        <authorList>
            <person name="Chiu C.-H."/>
            <person name="Tang P."/>
            <person name="Chu C."/>
            <person name="Hu S."/>
            <person name="Bao Q."/>
            <person name="Yu J."/>
            <person name="Chou Y.-Y."/>
            <person name="Wang H.-S."/>
            <person name="Lee Y.-S."/>
        </authorList>
    </citation>
    <scope>NUCLEOTIDE SEQUENCE [LARGE SCALE GENOMIC DNA]</scope>
    <source>
        <strain>SC-B67</strain>
    </source>
</reference>
<gene>
    <name evidence="1" type="primary">pyrH</name>
    <name type="ordered locus">SCH_0218</name>
</gene>